<gene>
    <name type="ORF">ORF3b</name>
</gene>
<organism>
    <name type="scientific">Cucumber mosaic virus (strain FC)</name>
    <name type="common">CMV</name>
    <dbReference type="NCBI Taxonomy" id="31717"/>
    <lineage>
        <taxon>Viruses</taxon>
        <taxon>Riboviria</taxon>
        <taxon>Orthornavirae</taxon>
        <taxon>Kitrinoviricota</taxon>
        <taxon>Alsuviricetes</taxon>
        <taxon>Martellivirales</taxon>
        <taxon>Bromoviridae</taxon>
        <taxon>Cucumovirus</taxon>
        <taxon>Cucumber mosaic virus</taxon>
    </lineage>
</organism>
<comment type="function">
    <text evidence="1">Capsid protein. Probably binds RNA and plays a role in packaging (By similarity).</text>
</comment>
<comment type="subcellular location">
    <subcellularLocation>
        <location evidence="4">Virion</location>
    </subcellularLocation>
</comment>
<comment type="domain">
    <text evidence="1">The N-terminal arginine-rich stretch does not seem to be the major RNA-binding region that allows formation of an infectious ribonucleoprotein complex.</text>
</comment>
<comment type="similarity">
    <text evidence="4">Belongs to the cucumovirus capsid protein family.</text>
</comment>
<keyword id="KW-0007">Acetylation</keyword>
<keyword id="KW-0167">Capsid protein</keyword>
<keyword id="KW-0687">Ribonucleoprotein</keyword>
<keyword id="KW-0694">RNA-binding</keyword>
<keyword id="KW-1142">T=3 icosahedral capsid protein</keyword>
<keyword id="KW-0543">Viral nucleoprotein</keyword>
<keyword id="KW-0946">Virion</keyword>
<evidence type="ECO:0000250" key="1"/>
<evidence type="ECO:0000256" key="2">
    <source>
        <dbReference type="SAM" id="MobiDB-lite"/>
    </source>
</evidence>
<evidence type="ECO:0000269" key="3">
    <source>
    </source>
</evidence>
<evidence type="ECO:0000305" key="4"/>
<accession>Q00259</accession>
<reference key="1">
    <citation type="journal article" date="1991" name="J. Gen. Virol.">
        <title>Coat protein gene sequences of two cucumber mosaic virus strains reveal a single amino acid change correlating with chlorosis induction.</title>
        <authorList>
            <person name="Shintaku M."/>
        </authorList>
    </citation>
    <scope>NUCLEOTIDE SEQUENCE [GENOMIC RNA]</scope>
</reference>
<reference key="2">
    <citation type="journal article" date="1982" name="J. Biochem.">
        <title>Micro-identification of amino-terminal acetylamino acids in proteins.</title>
        <authorList>
            <person name="Tsunasawa S."/>
            <person name="Narita K."/>
        </authorList>
    </citation>
    <scope>ACETYLATION AT MET-1</scope>
</reference>
<protein>
    <recommendedName>
        <fullName>Capsid protein</fullName>
        <shortName>CP</shortName>
    </recommendedName>
    <alternativeName>
        <fullName>Coat protein</fullName>
    </alternativeName>
</protein>
<name>CAPSD_CMVFC</name>
<feature type="chain" id="PRO_0000083203" description="Capsid protein">
    <location>
        <begin position="1"/>
        <end position="218"/>
    </location>
</feature>
<feature type="region of interest" description="Disordered" evidence="2">
    <location>
        <begin position="1"/>
        <end position="28"/>
    </location>
</feature>
<feature type="compositionally biased region" description="Basic residues" evidence="2">
    <location>
        <begin position="11"/>
        <end position="21"/>
    </location>
</feature>
<feature type="modified residue" description="N-acetylmethionine; by host" evidence="3">
    <location>
        <position position="1"/>
    </location>
</feature>
<proteinExistence type="evidence at protein level"/>
<organismHost>
    <name type="scientific">Cucumis sativus</name>
    <name type="common">Cucumber</name>
    <dbReference type="NCBI Taxonomy" id="3659"/>
</organismHost>
<organismHost>
    <name type="scientific">Solanum lycopersicum</name>
    <name type="common">Tomato</name>
    <name type="synonym">Lycopersicon esculentum</name>
    <dbReference type="NCBI Taxonomy" id="4081"/>
</organismHost>
<organismHost>
    <name type="scientific">Spinacia oleracea</name>
    <name type="common">Spinach</name>
    <dbReference type="NCBI Taxonomy" id="3562"/>
</organismHost>
<sequence>MDKSESTSAGRNRRRRPRRGSRSAPSSADANFRVLSQQLSRLNKTLAAGRPTINHPTFVGSERCRPGYTFTSITLKPPKIDRGSYYGKRLLLPDSVTEYDKKLVSRIQIRVNPLPKFDSTVWVTVRKVSASSDLSVAAISAMFADGASPVLVYQYAASGVQANNKLLYDLSAMRADIGDMRKYAVLVYSKDDALETDELVLHVDIEHQRIPTSGVLPV</sequence>
<dbReference type="EMBL" id="D10544">
    <property type="protein sequence ID" value="BAA01403.1"/>
    <property type="molecule type" value="Genomic_RNA"/>
</dbReference>
<dbReference type="PIR" id="JQ1253">
    <property type="entry name" value="JQ1253"/>
</dbReference>
<dbReference type="SMR" id="Q00259"/>
<dbReference type="iPTMnet" id="Q00259"/>
<dbReference type="GO" id="GO:1990904">
    <property type="term" value="C:ribonucleoprotein complex"/>
    <property type="evidence" value="ECO:0007669"/>
    <property type="project" value="UniProtKB-KW"/>
</dbReference>
<dbReference type="GO" id="GO:0039617">
    <property type="term" value="C:T=3 icosahedral viral capsid"/>
    <property type="evidence" value="ECO:0007669"/>
    <property type="project" value="UniProtKB-KW"/>
</dbReference>
<dbReference type="GO" id="GO:0019013">
    <property type="term" value="C:viral nucleocapsid"/>
    <property type="evidence" value="ECO:0007669"/>
    <property type="project" value="UniProtKB-KW"/>
</dbReference>
<dbReference type="GO" id="GO:0003723">
    <property type="term" value="F:RNA binding"/>
    <property type="evidence" value="ECO:0007669"/>
    <property type="project" value="UniProtKB-KW"/>
</dbReference>
<dbReference type="GO" id="GO:0005198">
    <property type="term" value="F:structural molecule activity"/>
    <property type="evidence" value="ECO:0007669"/>
    <property type="project" value="InterPro"/>
</dbReference>
<dbReference type="Gene3D" id="2.60.120.530">
    <property type="entry name" value="Cucumovirus coat protein, subunit A"/>
    <property type="match status" value="1"/>
</dbReference>
<dbReference type="InterPro" id="IPR000247">
    <property type="entry name" value="Cucumovirus_coat"/>
</dbReference>
<dbReference type="InterPro" id="IPR037137">
    <property type="entry name" value="Cucumovirus_coat_Asu_sf"/>
</dbReference>
<dbReference type="Pfam" id="PF00760">
    <property type="entry name" value="Cucumo_coat"/>
    <property type="match status" value="1"/>
</dbReference>
<dbReference type="PRINTS" id="PR00222">
    <property type="entry name" value="CUCUMOCOAT"/>
</dbReference>
<dbReference type="SUPFAM" id="SSF88633">
    <property type="entry name" value="Positive stranded ssRNA viruses"/>
    <property type="match status" value="1"/>
</dbReference>